<organism>
    <name type="scientific">Escherichia coli O157:H7</name>
    <dbReference type="NCBI Taxonomy" id="83334"/>
    <lineage>
        <taxon>Bacteria</taxon>
        <taxon>Pseudomonadati</taxon>
        <taxon>Pseudomonadota</taxon>
        <taxon>Gammaproteobacteria</taxon>
        <taxon>Enterobacterales</taxon>
        <taxon>Enterobacteriaceae</taxon>
        <taxon>Escherichia</taxon>
    </lineage>
</organism>
<gene>
    <name type="primary">rhtB</name>
    <name type="ordered locus">Z5345</name>
    <name type="ordered locus">ECs4754</name>
</gene>
<dbReference type="EMBL" id="AE005174">
    <property type="protein sequence ID" value="AAG59020.1"/>
    <property type="status" value="ALT_INIT"/>
    <property type="molecule type" value="Genomic_DNA"/>
</dbReference>
<dbReference type="EMBL" id="BA000007">
    <property type="protein sequence ID" value="BAB38177.1"/>
    <property type="molecule type" value="Genomic_DNA"/>
</dbReference>
<dbReference type="PIR" id="B91223">
    <property type="entry name" value="B91223"/>
</dbReference>
<dbReference type="RefSeq" id="NP_312781.1">
    <property type="nucleotide sequence ID" value="NC_002695.1"/>
</dbReference>
<dbReference type="RefSeq" id="WP_000171710.1">
    <property type="nucleotide sequence ID" value="NZ_SWKA01000005.1"/>
</dbReference>
<dbReference type="STRING" id="155864.Z5345"/>
<dbReference type="GeneID" id="915150"/>
<dbReference type="GeneID" id="93778113"/>
<dbReference type="KEGG" id="ece:Z5345"/>
<dbReference type="KEGG" id="ecs:ECs_4754"/>
<dbReference type="PATRIC" id="fig|386585.9.peg.4963"/>
<dbReference type="eggNOG" id="COG1280">
    <property type="taxonomic scope" value="Bacteria"/>
</dbReference>
<dbReference type="HOGENOM" id="CLU_079569_2_1_6"/>
<dbReference type="OMA" id="MQYVVLG"/>
<dbReference type="Proteomes" id="UP000000558">
    <property type="component" value="Chromosome"/>
</dbReference>
<dbReference type="Proteomes" id="UP000002519">
    <property type="component" value="Chromosome"/>
</dbReference>
<dbReference type="GO" id="GO:0005886">
    <property type="term" value="C:plasma membrane"/>
    <property type="evidence" value="ECO:0007669"/>
    <property type="project" value="UniProtKB-SubCell"/>
</dbReference>
<dbReference type="GO" id="GO:0042970">
    <property type="term" value="F:homoserine transmembrane transporter activity"/>
    <property type="evidence" value="ECO:0007669"/>
    <property type="project" value="TreeGrafter"/>
</dbReference>
<dbReference type="InterPro" id="IPR004778">
    <property type="entry name" value="Homoserine/Threonine_efflux"/>
</dbReference>
<dbReference type="InterPro" id="IPR001123">
    <property type="entry name" value="LeuE-type"/>
</dbReference>
<dbReference type="NCBIfam" id="TIGR00949">
    <property type="entry name" value="2A76"/>
    <property type="match status" value="1"/>
</dbReference>
<dbReference type="NCBIfam" id="NF007812">
    <property type="entry name" value="PRK10520.1"/>
    <property type="match status" value="1"/>
</dbReference>
<dbReference type="PANTHER" id="PTHR30086">
    <property type="entry name" value="ARGININE EXPORTER PROTEIN ARGO"/>
    <property type="match status" value="1"/>
</dbReference>
<dbReference type="PANTHER" id="PTHR30086:SF14">
    <property type="entry name" value="HOMOSERINE_HOMOSERINE LACTONE EFFLUX PROTEIN"/>
    <property type="match status" value="1"/>
</dbReference>
<dbReference type="Pfam" id="PF01810">
    <property type="entry name" value="LysE"/>
    <property type="match status" value="1"/>
</dbReference>
<dbReference type="PIRSF" id="PIRSF006324">
    <property type="entry name" value="LeuE"/>
    <property type="match status" value="1"/>
</dbReference>
<keyword id="KW-1003">Cell membrane</keyword>
<keyword id="KW-0472">Membrane</keyword>
<keyword id="KW-1185">Reference proteome</keyword>
<keyword id="KW-0812">Transmembrane</keyword>
<keyword id="KW-1133">Transmembrane helix</keyword>
<keyword id="KW-0813">Transport</keyword>
<name>RHTB_ECO57</name>
<accession>P0AG36</accession>
<accession>P27847</accession>
<reference key="1">
    <citation type="journal article" date="2001" name="Nature">
        <title>Genome sequence of enterohaemorrhagic Escherichia coli O157:H7.</title>
        <authorList>
            <person name="Perna N.T."/>
            <person name="Plunkett G. III"/>
            <person name="Burland V."/>
            <person name="Mau B."/>
            <person name="Glasner J.D."/>
            <person name="Rose D.J."/>
            <person name="Mayhew G.F."/>
            <person name="Evans P.S."/>
            <person name="Gregor J."/>
            <person name="Kirkpatrick H.A."/>
            <person name="Posfai G."/>
            <person name="Hackett J."/>
            <person name="Klink S."/>
            <person name="Boutin A."/>
            <person name="Shao Y."/>
            <person name="Miller L."/>
            <person name="Grotbeck E.J."/>
            <person name="Davis N.W."/>
            <person name="Lim A."/>
            <person name="Dimalanta E.T."/>
            <person name="Potamousis K."/>
            <person name="Apodaca J."/>
            <person name="Anantharaman T.S."/>
            <person name="Lin J."/>
            <person name="Yen G."/>
            <person name="Schwartz D.C."/>
            <person name="Welch R.A."/>
            <person name="Blattner F.R."/>
        </authorList>
    </citation>
    <scope>NUCLEOTIDE SEQUENCE [LARGE SCALE GENOMIC DNA]</scope>
    <source>
        <strain>O157:H7 / EDL933 / ATCC 700927 / EHEC</strain>
    </source>
</reference>
<reference key="2">
    <citation type="journal article" date="2001" name="DNA Res.">
        <title>Complete genome sequence of enterohemorrhagic Escherichia coli O157:H7 and genomic comparison with a laboratory strain K-12.</title>
        <authorList>
            <person name="Hayashi T."/>
            <person name="Makino K."/>
            <person name="Ohnishi M."/>
            <person name="Kurokawa K."/>
            <person name="Ishii K."/>
            <person name="Yokoyama K."/>
            <person name="Han C.-G."/>
            <person name="Ohtsubo E."/>
            <person name="Nakayama K."/>
            <person name="Murata T."/>
            <person name="Tanaka M."/>
            <person name="Tobe T."/>
            <person name="Iida T."/>
            <person name="Takami H."/>
            <person name="Honda T."/>
            <person name="Sasakawa C."/>
            <person name="Ogasawara N."/>
            <person name="Yasunaga T."/>
            <person name="Kuhara S."/>
            <person name="Shiba T."/>
            <person name="Hattori M."/>
            <person name="Shinagawa H."/>
        </authorList>
    </citation>
    <scope>NUCLEOTIDE SEQUENCE [LARGE SCALE GENOMIC DNA]</scope>
    <source>
        <strain>O157:H7 / Sakai / RIMD 0509952 / EHEC</strain>
    </source>
</reference>
<protein>
    <recommendedName>
        <fullName>Homoserine/homoserine lactone efflux protein</fullName>
    </recommendedName>
</protein>
<feature type="chain" id="PRO_0000094731" description="Homoserine/homoserine lactone efflux protein">
    <location>
        <begin position="1"/>
        <end position="206"/>
    </location>
</feature>
<feature type="transmembrane region" description="Helical" evidence="2">
    <location>
        <begin position="5"/>
        <end position="25"/>
    </location>
</feature>
<feature type="transmembrane region" description="Helical" evidence="2">
    <location>
        <begin position="45"/>
        <end position="65"/>
    </location>
</feature>
<feature type="transmembrane region" description="Helical" evidence="2">
    <location>
        <begin position="68"/>
        <end position="88"/>
    </location>
</feature>
<feature type="transmembrane region" description="Helical" evidence="2">
    <location>
        <begin position="117"/>
        <end position="137"/>
    </location>
</feature>
<feature type="transmembrane region" description="Helical" evidence="2">
    <location>
        <begin position="148"/>
        <end position="168"/>
    </location>
</feature>
<feature type="transmembrane region" description="Helical" evidence="2">
    <location>
        <begin position="182"/>
        <end position="202"/>
    </location>
</feature>
<sequence>MTLEWWFAYLLTSIILSLSPGSGAINTMTTSLNHGYRGAVASIAGLQTGLAIHIVLVGVGLGTLFSRSVIAFEVLKWAGAAYLIWLGIQQWRAAGAIDLKSLASTQSRRHLFQRAVFVNLTNPKSIVFLAALFPQFIMPQQPQLMQYIVLGVTTIVVDIIVMIGYATLAQRIALWIKGPKQMKALNKIFGSLFMLVGALLASARHA</sequence>
<comment type="function">
    <text evidence="1">Conducts the efflux of homoserine and homoserine lactone.</text>
</comment>
<comment type="subcellular location">
    <subcellularLocation>
        <location evidence="3">Cell membrane</location>
        <topology evidence="3">Multi-pass membrane protein</topology>
    </subcellularLocation>
</comment>
<comment type="similarity">
    <text evidence="3">Belongs to the Rht family.</text>
</comment>
<comment type="sequence caution" evidence="3">
    <conflict type="erroneous initiation">
        <sequence resource="EMBL-CDS" id="AAG59020"/>
    </conflict>
</comment>
<proteinExistence type="inferred from homology"/>
<evidence type="ECO:0000250" key="1"/>
<evidence type="ECO:0000255" key="2"/>
<evidence type="ECO:0000305" key="3"/>